<evidence type="ECO:0000255" key="1">
    <source>
        <dbReference type="HAMAP-Rule" id="MF_01569"/>
    </source>
</evidence>
<dbReference type="EC" id="6.1.1.15" evidence="1"/>
<dbReference type="EMBL" id="AP008937">
    <property type="protein sequence ID" value="BAG27057.1"/>
    <property type="molecule type" value="Genomic_DNA"/>
</dbReference>
<dbReference type="RefSeq" id="WP_012391094.1">
    <property type="nucleotide sequence ID" value="NC_010610.1"/>
</dbReference>
<dbReference type="SMR" id="B2GBM5"/>
<dbReference type="KEGG" id="lfe:LAF_0721"/>
<dbReference type="PATRIC" id="fig|334390.5.peg.783"/>
<dbReference type="eggNOG" id="COG0442">
    <property type="taxonomic scope" value="Bacteria"/>
</dbReference>
<dbReference type="HOGENOM" id="CLU_016739_0_0_9"/>
<dbReference type="Proteomes" id="UP000001697">
    <property type="component" value="Chromosome"/>
</dbReference>
<dbReference type="GO" id="GO:0005829">
    <property type="term" value="C:cytosol"/>
    <property type="evidence" value="ECO:0007669"/>
    <property type="project" value="TreeGrafter"/>
</dbReference>
<dbReference type="GO" id="GO:0002161">
    <property type="term" value="F:aminoacyl-tRNA deacylase activity"/>
    <property type="evidence" value="ECO:0007669"/>
    <property type="project" value="InterPro"/>
</dbReference>
<dbReference type="GO" id="GO:0005524">
    <property type="term" value="F:ATP binding"/>
    <property type="evidence" value="ECO:0007669"/>
    <property type="project" value="UniProtKB-UniRule"/>
</dbReference>
<dbReference type="GO" id="GO:0140096">
    <property type="term" value="F:catalytic activity, acting on a protein"/>
    <property type="evidence" value="ECO:0007669"/>
    <property type="project" value="UniProtKB-ARBA"/>
</dbReference>
<dbReference type="GO" id="GO:0004827">
    <property type="term" value="F:proline-tRNA ligase activity"/>
    <property type="evidence" value="ECO:0007669"/>
    <property type="project" value="UniProtKB-UniRule"/>
</dbReference>
<dbReference type="GO" id="GO:0016740">
    <property type="term" value="F:transferase activity"/>
    <property type="evidence" value="ECO:0007669"/>
    <property type="project" value="UniProtKB-ARBA"/>
</dbReference>
<dbReference type="GO" id="GO:0006433">
    <property type="term" value="P:prolyl-tRNA aminoacylation"/>
    <property type="evidence" value="ECO:0007669"/>
    <property type="project" value="UniProtKB-UniRule"/>
</dbReference>
<dbReference type="CDD" id="cd04334">
    <property type="entry name" value="ProRS-INS"/>
    <property type="match status" value="1"/>
</dbReference>
<dbReference type="CDD" id="cd00861">
    <property type="entry name" value="ProRS_anticodon_short"/>
    <property type="match status" value="1"/>
</dbReference>
<dbReference type="CDD" id="cd00779">
    <property type="entry name" value="ProRS_core_prok"/>
    <property type="match status" value="1"/>
</dbReference>
<dbReference type="FunFam" id="3.40.50.800:FF:000011">
    <property type="entry name" value="Proline--tRNA ligase"/>
    <property type="match status" value="1"/>
</dbReference>
<dbReference type="Gene3D" id="3.40.50.800">
    <property type="entry name" value="Anticodon-binding domain"/>
    <property type="match status" value="1"/>
</dbReference>
<dbReference type="Gene3D" id="3.30.930.10">
    <property type="entry name" value="Bira Bifunctional Protein, Domain 2"/>
    <property type="match status" value="2"/>
</dbReference>
<dbReference type="HAMAP" id="MF_01569">
    <property type="entry name" value="Pro_tRNA_synth_type1"/>
    <property type="match status" value="1"/>
</dbReference>
<dbReference type="InterPro" id="IPR002314">
    <property type="entry name" value="aa-tRNA-synt_IIb"/>
</dbReference>
<dbReference type="InterPro" id="IPR006195">
    <property type="entry name" value="aa-tRNA-synth_II"/>
</dbReference>
<dbReference type="InterPro" id="IPR045864">
    <property type="entry name" value="aa-tRNA-synth_II/BPL/LPL"/>
</dbReference>
<dbReference type="InterPro" id="IPR004154">
    <property type="entry name" value="Anticodon-bd"/>
</dbReference>
<dbReference type="InterPro" id="IPR036621">
    <property type="entry name" value="Anticodon-bd_dom_sf"/>
</dbReference>
<dbReference type="InterPro" id="IPR002316">
    <property type="entry name" value="Pro-tRNA-ligase_IIa"/>
</dbReference>
<dbReference type="InterPro" id="IPR004500">
    <property type="entry name" value="Pro-tRNA-synth_IIa_bac-type"/>
</dbReference>
<dbReference type="InterPro" id="IPR023717">
    <property type="entry name" value="Pro-tRNA-Synthase_IIa_type1"/>
</dbReference>
<dbReference type="InterPro" id="IPR050062">
    <property type="entry name" value="Pro-tRNA_synthetase"/>
</dbReference>
<dbReference type="InterPro" id="IPR044140">
    <property type="entry name" value="ProRS_anticodon_short"/>
</dbReference>
<dbReference type="InterPro" id="IPR033730">
    <property type="entry name" value="ProRS_core_prok"/>
</dbReference>
<dbReference type="InterPro" id="IPR036754">
    <property type="entry name" value="YbaK/aa-tRNA-synt-asso_dom_sf"/>
</dbReference>
<dbReference type="InterPro" id="IPR007214">
    <property type="entry name" value="YbaK/aa-tRNA-synth-assoc-dom"/>
</dbReference>
<dbReference type="NCBIfam" id="NF006625">
    <property type="entry name" value="PRK09194.1"/>
    <property type="match status" value="1"/>
</dbReference>
<dbReference type="NCBIfam" id="TIGR00409">
    <property type="entry name" value="proS_fam_II"/>
    <property type="match status" value="1"/>
</dbReference>
<dbReference type="PANTHER" id="PTHR42753">
    <property type="entry name" value="MITOCHONDRIAL RIBOSOME PROTEIN L39/PROLYL-TRNA LIGASE FAMILY MEMBER"/>
    <property type="match status" value="1"/>
</dbReference>
<dbReference type="PANTHER" id="PTHR42753:SF2">
    <property type="entry name" value="PROLINE--TRNA LIGASE"/>
    <property type="match status" value="1"/>
</dbReference>
<dbReference type="Pfam" id="PF03129">
    <property type="entry name" value="HGTP_anticodon"/>
    <property type="match status" value="1"/>
</dbReference>
<dbReference type="Pfam" id="PF00587">
    <property type="entry name" value="tRNA-synt_2b"/>
    <property type="match status" value="1"/>
</dbReference>
<dbReference type="Pfam" id="PF04073">
    <property type="entry name" value="tRNA_edit"/>
    <property type="match status" value="1"/>
</dbReference>
<dbReference type="PRINTS" id="PR01046">
    <property type="entry name" value="TRNASYNTHPRO"/>
</dbReference>
<dbReference type="SUPFAM" id="SSF52954">
    <property type="entry name" value="Class II aaRS ABD-related"/>
    <property type="match status" value="1"/>
</dbReference>
<dbReference type="SUPFAM" id="SSF55681">
    <property type="entry name" value="Class II aaRS and biotin synthetases"/>
    <property type="match status" value="1"/>
</dbReference>
<dbReference type="SUPFAM" id="SSF55826">
    <property type="entry name" value="YbaK/ProRS associated domain"/>
    <property type="match status" value="1"/>
</dbReference>
<dbReference type="PROSITE" id="PS50862">
    <property type="entry name" value="AA_TRNA_LIGASE_II"/>
    <property type="match status" value="1"/>
</dbReference>
<feature type="chain" id="PRO_1000199399" description="Proline--tRNA ligase">
    <location>
        <begin position="1"/>
        <end position="573"/>
    </location>
</feature>
<sequence>MKQSQMLIPTQKEAPADAEVLSHKMMVRAGYIYQVSAGVWAYLPLAYRVIRKIEQIIREEMDKAGAVEMLLPGLLPADLWKESGRYEAYGDNLFKLKDRRERDFILGPTHEETVTSILRDAIHSYKKLPLVVYQLQDKYRDEDRPRYGILRGKEFEMLDGYSFSADQAGLDQAYDLQAKAYRNIFDRIGLDYKVILADSGTMGGKNSQEFSAPAAIGEDVIAYTDGDYAANLEKATTKFTPTKQIGEEAELTKKATPGAHTVDEAAESLGLEASQILKSMVFLAKFEGEELKPVMVLMRGNDEVNETKVASYLGCEELLMASEEDTEKYLGAHPGSLGPIGVKEDVTILADQHLQGMINMALGANDDGYHYINANFNRDFKVDQFGDFRTVQEGETAPDGLPIKFTNGIEIGHIFKLGTHYSEVFGATVLDQNGRDVPMIMGCYGIGVSRLLSAISEQNADENGLVWPQAVAPFDIHVIPVNAKKEDQMAMAEGITANLEEAGYEVLVDDRKERAGVKFADADLIGVPIRVTVGKKAGEGIVEIKIRKTGETLEVHKEELATNIAILLKQTAE</sequence>
<protein>
    <recommendedName>
        <fullName evidence="1">Proline--tRNA ligase</fullName>
        <ecNumber evidence="1">6.1.1.15</ecNumber>
    </recommendedName>
    <alternativeName>
        <fullName evidence="1">Prolyl-tRNA synthetase</fullName>
        <shortName evidence="1">ProRS</shortName>
    </alternativeName>
</protein>
<comment type="function">
    <text evidence="1">Catalyzes the attachment of proline to tRNA(Pro) in a two-step reaction: proline is first activated by ATP to form Pro-AMP and then transferred to the acceptor end of tRNA(Pro). As ProRS can inadvertently accommodate and process non-cognate amino acids such as alanine and cysteine, to avoid such errors it has two additional distinct editing activities against alanine. One activity is designated as 'pretransfer' editing and involves the tRNA(Pro)-independent hydrolysis of activated Ala-AMP. The other activity is designated 'posttransfer' editing and involves deacylation of mischarged Ala-tRNA(Pro). The misacylated Cys-tRNA(Pro) is not edited by ProRS.</text>
</comment>
<comment type="catalytic activity">
    <reaction evidence="1">
        <text>tRNA(Pro) + L-proline + ATP = L-prolyl-tRNA(Pro) + AMP + diphosphate</text>
        <dbReference type="Rhea" id="RHEA:14305"/>
        <dbReference type="Rhea" id="RHEA-COMP:9700"/>
        <dbReference type="Rhea" id="RHEA-COMP:9702"/>
        <dbReference type="ChEBI" id="CHEBI:30616"/>
        <dbReference type="ChEBI" id="CHEBI:33019"/>
        <dbReference type="ChEBI" id="CHEBI:60039"/>
        <dbReference type="ChEBI" id="CHEBI:78442"/>
        <dbReference type="ChEBI" id="CHEBI:78532"/>
        <dbReference type="ChEBI" id="CHEBI:456215"/>
        <dbReference type="EC" id="6.1.1.15"/>
    </reaction>
</comment>
<comment type="subunit">
    <text evidence="1">Homodimer.</text>
</comment>
<comment type="subcellular location">
    <subcellularLocation>
        <location evidence="1">Cytoplasm</location>
    </subcellularLocation>
</comment>
<comment type="domain">
    <text evidence="1">Consists of three domains: the N-terminal catalytic domain, the editing domain and the C-terminal anticodon-binding domain.</text>
</comment>
<comment type="similarity">
    <text evidence="1">Belongs to the class-II aminoacyl-tRNA synthetase family. ProS type 1 subfamily.</text>
</comment>
<proteinExistence type="inferred from homology"/>
<gene>
    <name evidence="1" type="primary">proS</name>
    <name type="ordered locus">LAF_0721</name>
</gene>
<reference key="1">
    <citation type="journal article" date="2008" name="DNA Res.">
        <title>Comparative genome analysis of Lactobacillus reuteri and Lactobacillus fermentum reveal a genomic island for reuterin and cobalamin production.</title>
        <authorList>
            <person name="Morita H."/>
            <person name="Toh H."/>
            <person name="Fukuda S."/>
            <person name="Horikawa H."/>
            <person name="Oshima K."/>
            <person name="Suzuki T."/>
            <person name="Murakami M."/>
            <person name="Hisamatsu S."/>
            <person name="Kato Y."/>
            <person name="Takizawa T."/>
            <person name="Fukuoka H."/>
            <person name="Yoshimura T."/>
            <person name="Itoh K."/>
            <person name="O'Sullivan D.J."/>
            <person name="McKay L.L."/>
            <person name="Ohno H."/>
            <person name="Kikuchi J."/>
            <person name="Masaoka T."/>
            <person name="Hattori M."/>
        </authorList>
    </citation>
    <scope>NUCLEOTIDE SEQUENCE [LARGE SCALE GENOMIC DNA]</scope>
    <source>
        <strain>NBRC 3956 / LMG 18251</strain>
    </source>
</reference>
<organism>
    <name type="scientific">Limosilactobacillus fermentum (strain NBRC 3956 / LMG 18251)</name>
    <name type="common">Lactobacillus fermentum</name>
    <dbReference type="NCBI Taxonomy" id="334390"/>
    <lineage>
        <taxon>Bacteria</taxon>
        <taxon>Bacillati</taxon>
        <taxon>Bacillota</taxon>
        <taxon>Bacilli</taxon>
        <taxon>Lactobacillales</taxon>
        <taxon>Lactobacillaceae</taxon>
        <taxon>Limosilactobacillus</taxon>
    </lineage>
</organism>
<keyword id="KW-0030">Aminoacyl-tRNA synthetase</keyword>
<keyword id="KW-0067">ATP-binding</keyword>
<keyword id="KW-0963">Cytoplasm</keyword>
<keyword id="KW-0436">Ligase</keyword>
<keyword id="KW-0547">Nucleotide-binding</keyword>
<keyword id="KW-0648">Protein biosynthesis</keyword>
<keyword id="KW-1185">Reference proteome</keyword>
<accession>B2GBM5</accession>
<name>SYP_LIMF3</name>